<dbReference type="EMBL" id="DQ070851">
    <property type="protein sequence ID" value="AAY82250.1"/>
    <property type="molecule type" value="mRNA"/>
</dbReference>
<dbReference type="EMBL" id="BC118268">
    <property type="protein sequence ID" value="AAI18269.1"/>
    <property type="molecule type" value="mRNA"/>
</dbReference>
<dbReference type="RefSeq" id="NP_001020499.1">
    <property type="nucleotide sequence ID" value="NM_001025328.2"/>
</dbReference>
<dbReference type="RefSeq" id="XP_005202975.1">
    <property type="nucleotide sequence ID" value="XM_005202918.4"/>
</dbReference>
<dbReference type="RefSeq" id="XP_005202976.1">
    <property type="nucleotide sequence ID" value="XM_005202919.4"/>
</dbReference>
<dbReference type="RefSeq" id="XP_005202977.1">
    <property type="nucleotide sequence ID" value="XM_005202920.4"/>
</dbReference>
<dbReference type="SMR" id="Q4PL64"/>
<dbReference type="FunCoup" id="Q4PL64">
    <property type="interactions" value="986"/>
</dbReference>
<dbReference type="STRING" id="9913.ENSBTAP00000010971"/>
<dbReference type="PaxDb" id="9913-ENSBTAP00000010971"/>
<dbReference type="Ensembl" id="ENSBTAT00000010971.4">
    <property type="protein sequence ID" value="ENSBTAP00000010971.3"/>
    <property type="gene ID" value="ENSBTAG00000008336.5"/>
</dbReference>
<dbReference type="GeneID" id="509772"/>
<dbReference type="KEGG" id="bta:509772"/>
<dbReference type="CTD" id="3208"/>
<dbReference type="VEuPathDB" id="HostDB:ENSBTAG00000008336"/>
<dbReference type="VGNC" id="VGNC:29936">
    <property type="gene designation" value="HPCA"/>
</dbReference>
<dbReference type="eggNOG" id="KOG0044">
    <property type="taxonomic scope" value="Eukaryota"/>
</dbReference>
<dbReference type="GeneTree" id="ENSGT00940000158110"/>
<dbReference type="HOGENOM" id="CLU_072366_1_0_1"/>
<dbReference type="InParanoid" id="Q4PL64"/>
<dbReference type="OMA" id="QMYDPAR"/>
<dbReference type="OrthoDB" id="191686at2759"/>
<dbReference type="TreeFam" id="TF300009"/>
<dbReference type="Proteomes" id="UP000009136">
    <property type="component" value="Chromosome 2"/>
</dbReference>
<dbReference type="Bgee" id="ENSBTAG00000008336">
    <property type="expression patterns" value="Expressed in Ammon's horn and 79 other cell types or tissues"/>
</dbReference>
<dbReference type="GO" id="GO:0005737">
    <property type="term" value="C:cytoplasm"/>
    <property type="evidence" value="ECO:0000250"/>
    <property type="project" value="UniProtKB"/>
</dbReference>
<dbReference type="GO" id="GO:0005829">
    <property type="term" value="C:cytosol"/>
    <property type="evidence" value="ECO:0000250"/>
    <property type="project" value="UniProtKB"/>
</dbReference>
<dbReference type="GO" id="GO:0016020">
    <property type="term" value="C:membrane"/>
    <property type="evidence" value="ECO:0000250"/>
    <property type="project" value="UniProtKB"/>
</dbReference>
<dbReference type="GO" id="GO:0003779">
    <property type="term" value="F:actin binding"/>
    <property type="evidence" value="ECO:0007669"/>
    <property type="project" value="Ensembl"/>
</dbReference>
<dbReference type="GO" id="GO:0005509">
    <property type="term" value="F:calcium ion binding"/>
    <property type="evidence" value="ECO:0000250"/>
    <property type="project" value="UniProtKB"/>
</dbReference>
<dbReference type="GO" id="GO:0042802">
    <property type="term" value="F:identical protein binding"/>
    <property type="evidence" value="ECO:0000250"/>
    <property type="project" value="UniProtKB"/>
</dbReference>
<dbReference type="GO" id="GO:0071277">
    <property type="term" value="P:cellular response to calcium ion"/>
    <property type="evidence" value="ECO:0000250"/>
    <property type="project" value="UniProtKB"/>
</dbReference>
<dbReference type="GO" id="GO:0048839">
    <property type="term" value="P:inner ear development"/>
    <property type="evidence" value="ECO:0007669"/>
    <property type="project" value="Ensembl"/>
</dbReference>
<dbReference type="GO" id="GO:0009966">
    <property type="term" value="P:regulation of signal transduction"/>
    <property type="evidence" value="ECO:0000318"/>
    <property type="project" value="GO_Central"/>
</dbReference>
<dbReference type="GO" id="GO:1901385">
    <property type="term" value="P:regulation of voltage-gated calcium channel activity"/>
    <property type="evidence" value="ECO:0000250"/>
    <property type="project" value="UniProtKB"/>
</dbReference>
<dbReference type="CDD" id="cd00051">
    <property type="entry name" value="EFh"/>
    <property type="match status" value="2"/>
</dbReference>
<dbReference type="FunFam" id="1.10.238.10:FF:000078">
    <property type="entry name" value="Hippocalcin-like 1"/>
    <property type="match status" value="1"/>
</dbReference>
<dbReference type="FunFam" id="1.10.238.10:FF:000072">
    <property type="entry name" value="Hippocalcin-like protein 1"/>
    <property type="match status" value="1"/>
</dbReference>
<dbReference type="Gene3D" id="1.10.238.10">
    <property type="entry name" value="EF-hand"/>
    <property type="match status" value="1"/>
</dbReference>
<dbReference type="InterPro" id="IPR011992">
    <property type="entry name" value="EF-hand-dom_pair"/>
</dbReference>
<dbReference type="InterPro" id="IPR018247">
    <property type="entry name" value="EF_Hand_1_Ca_BS"/>
</dbReference>
<dbReference type="InterPro" id="IPR002048">
    <property type="entry name" value="EF_hand_dom"/>
</dbReference>
<dbReference type="InterPro" id="IPR028846">
    <property type="entry name" value="Recoverin"/>
</dbReference>
<dbReference type="PANTHER" id="PTHR23055">
    <property type="entry name" value="CALCIUM BINDING PROTEINS"/>
    <property type="match status" value="1"/>
</dbReference>
<dbReference type="PANTHER" id="PTHR23055:SF57">
    <property type="entry name" value="NEURON-SPECIFIC CALCIUM-BINDING PROTEIN HIPPOCALCIN"/>
    <property type="match status" value="1"/>
</dbReference>
<dbReference type="Pfam" id="PF00036">
    <property type="entry name" value="EF-hand_1"/>
    <property type="match status" value="1"/>
</dbReference>
<dbReference type="Pfam" id="PF13499">
    <property type="entry name" value="EF-hand_7"/>
    <property type="match status" value="1"/>
</dbReference>
<dbReference type="PRINTS" id="PR00450">
    <property type="entry name" value="RECOVERIN"/>
</dbReference>
<dbReference type="SMART" id="SM00054">
    <property type="entry name" value="EFh"/>
    <property type="match status" value="3"/>
</dbReference>
<dbReference type="SUPFAM" id="SSF47473">
    <property type="entry name" value="EF-hand"/>
    <property type="match status" value="1"/>
</dbReference>
<dbReference type="PROSITE" id="PS00018">
    <property type="entry name" value="EF_HAND_1"/>
    <property type="match status" value="3"/>
</dbReference>
<dbReference type="PROSITE" id="PS50222">
    <property type="entry name" value="EF_HAND_2"/>
    <property type="match status" value="3"/>
</dbReference>
<protein>
    <recommendedName>
        <fullName evidence="4">Neuron-specific calcium-binding protein hippocalcin</fullName>
    </recommendedName>
</protein>
<comment type="function">
    <text evidence="1 2">Calcium-binding protein that may play a role in the regulation of voltage-dependent calcium channels. May also play a role in cyclic-nucleotide-mediated signaling through the regulation of adenylate and guanylate cyclases.</text>
</comment>
<comment type="subunit">
    <text evidence="1">Oligomer; oligomerization is calcium-dependent. May interact with the voltage-dependent P/Q- and N-type calcium channels CACNA1A and CACNA1B.</text>
</comment>
<comment type="subcellular location">
    <subcellularLocation>
        <location evidence="1 2">Cytoplasm</location>
        <location evidence="1 2">Cytosol</location>
    </subcellularLocation>
    <subcellularLocation>
        <location evidence="2">Membrane</location>
        <topology evidence="2">Peripheral membrane protein</topology>
    </subcellularLocation>
    <text evidence="1 2">Association with membranes is calcium-dependent (By similarity). Enriched in the perinuclear region, probably at the trans Golgi network in response to calcium (By similarity).</text>
</comment>
<comment type="domain">
    <text evidence="1">Binds 3 calcium via EF-hand domains. The cryptic EF-hand 1 does not bind calcium.</text>
</comment>
<comment type="PTM">
    <text evidence="2">Myristoylation facilitates association with membranes.</text>
</comment>
<comment type="similarity">
    <text evidence="4">Belongs to the recoverin family.</text>
</comment>
<reference key="1">
    <citation type="submission" date="2005-05" db="EMBL/GenBank/DDBJ databases">
        <title>Partial purification of bovine hippocalcin and cloning.</title>
        <authorList>
            <person name="Krishnan A."/>
            <person name="Duda T."/>
            <person name="Sharma R.K."/>
        </authorList>
    </citation>
    <scope>NUCLEOTIDE SEQUENCE [MRNA]</scope>
</reference>
<reference key="2">
    <citation type="submission" date="2006-06" db="EMBL/GenBank/DDBJ databases">
        <authorList>
            <consortium name="NIH - Mammalian Gene Collection (MGC) project"/>
        </authorList>
    </citation>
    <scope>NUCLEOTIDE SEQUENCE [LARGE SCALE MRNA]</scope>
    <source>
        <strain>Hereford</strain>
        <tissue>Basal ganglia</tissue>
    </source>
</reference>
<feature type="initiator methionine" description="Removed" evidence="2">
    <location>
        <position position="1"/>
    </location>
</feature>
<feature type="chain" id="PRO_0000073767" description="Neuron-specific calcium-binding protein hippocalcin">
    <location>
        <begin position="2"/>
        <end position="193"/>
    </location>
</feature>
<feature type="domain" description="EF-hand 1" evidence="4">
    <location>
        <begin position="24"/>
        <end position="59"/>
    </location>
</feature>
<feature type="domain" description="EF-hand 2" evidence="3">
    <location>
        <begin position="60"/>
        <end position="95"/>
    </location>
</feature>
<feature type="domain" description="EF-hand 3" evidence="3">
    <location>
        <begin position="96"/>
        <end position="131"/>
    </location>
</feature>
<feature type="domain" description="EF-hand 4" evidence="3">
    <location>
        <begin position="144"/>
        <end position="179"/>
    </location>
</feature>
<feature type="binding site" evidence="3">
    <location>
        <position position="73"/>
    </location>
    <ligand>
        <name>Ca(2+)</name>
        <dbReference type="ChEBI" id="CHEBI:29108"/>
        <label>1</label>
    </ligand>
</feature>
<feature type="binding site" evidence="3">
    <location>
        <position position="75"/>
    </location>
    <ligand>
        <name>Ca(2+)</name>
        <dbReference type="ChEBI" id="CHEBI:29108"/>
        <label>1</label>
    </ligand>
</feature>
<feature type="binding site" evidence="3">
    <location>
        <position position="77"/>
    </location>
    <ligand>
        <name>Ca(2+)</name>
        <dbReference type="ChEBI" id="CHEBI:29108"/>
        <label>1</label>
    </ligand>
</feature>
<feature type="binding site" evidence="3">
    <location>
        <position position="79"/>
    </location>
    <ligand>
        <name>Ca(2+)</name>
        <dbReference type="ChEBI" id="CHEBI:29108"/>
        <label>1</label>
    </ligand>
</feature>
<feature type="binding site" evidence="3">
    <location>
        <position position="84"/>
    </location>
    <ligand>
        <name>Ca(2+)</name>
        <dbReference type="ChEBI" id="CHEBI:29108"/>
        <label>1</label>
    </ligand>
</feature>
<feature type="binding site" evidence="3">
    <location>
        <position position="109"/>
    </location>
    <ligand>
        <name>Ca(2+)</name>
        <dbReference type="ChEBI" id="CHEBI:29108"/>
        <label>2</label>
    </ligand>
</feature>
<feature type="binding site" evidence="3">
    <location>
        <position position="111"/>
    </location>
    <ligand>
        <name>Ca(2+)</name>
        <dbReference type="ChEBI" id="CHEBI:29108"/>
        <label>2</label>
    </ligand>
</feature>
<feature type="binding site" evidence="3">
    <location>
        <position position="113"/>
    </location>
    <ligand>
        <name>Ca(2+)</name>
        <dbReference type="ChEBI" id="CHEBI:29108"/>
        <label>2</label>
    </ligand>
</feature>
<feature type="binding site" evidence="3">
    <location>
        <position position="115"/>
    </location>
    <ligand>
        <name>Ca(2+)</name>
        <dbReference type="ChEBI" id="CHEBI:29108"/>
        <label>2</label>
    </ligand>
</feature>
<feature type="binding site" evidence="3">
    <location>
        <position position="120"/>
    </location>
    <ligand>
        <name>Ca(2+)</name>
        <dbReference type="ChEBI" id="CHEBI:29108"/>
        <label>2</label>
    </ligand>
</feature>
<feature type="binding site" evidence="3">
    <location>
        <position position="157"/>
    </location>
    <ligand>
        <name>Ca(2+)</name>
        <dbReference type="ChEBI" id="CHEBI:29108"/>
        <label>3</label>
    </ligand>
</feature>
<feature type="binding site" evidence="3">
    <location>
        <position position="159"/>
    </location>
    <ligand>
        <name>Ca(2+)</name>
        <dbReference type="ChEBI" id="CHEBI:29108"/>
        <label>3</label>
    </ligand>
</feature>
<feature type="binding site" evidence="3">
    <location>
        <position position="161"/>
    </location>
    <ligand>
        <name>Ca(2+)</name>
        <dbReference type="ChEBI" id="CHEBI:29108"/>
        <label>3</label>
    </ligand>
</feature>
<feature type="binding site" evidence="3">
    <location>
        <position position="163"/>
    </location>
    <ligand>
        <name>Ca(2+)</name>
        <dbReference type="ChEBI" id="CHEBI:29108"/>
        <label>3</label>
    </ligand>
</feature>
<feature type="binding site" evidence="3">
    <location>
        <position position="168"/>
    </location>
    <ligand>
        <name>Ca(2+)</name>
        <dbReference type="ChEBI" id="CHEBI:29108"/>
        <label>3</label>
    </ligand>
</feature>
<feature type="lipid moiety-binding region" description="N-myristoyl glycine" evidence="2">
    <location>
        <position position="2"/>
    </location>
</feature>
<sequence>MGKQNSKLRPEMLQDLRENTEFSELELQEWYKGFLKDCPTGILNVDEFKKIYANFFPYGDASKFAEHVFRTFDTNSDGTIDFREFIIALSVTSRGRLEQKLMWAFSMYDLDGNGYISREEMLEIVQAIYKMVSSVMKMPEDESTPEKRTEKIFRQMDTNNDGKLSLEEFIRGAKSDPSIVRLLQCDPSSASQF</sequence>
<keyword id="KW-0106">Calcium</keyword>
<keyword id="KW-0963">Cytoplasm</keyword>
<keyword id="KW-0449">Lipoprotein</keyword>
<keyword id="KW-0472">Membrane</keyword>
<keyword id="KW-0479">Metal-binding</keyword>
<keyword id="KW-0519">Myristate</keyword>
<keyword id="KW-1185">Reference proteome</keyword>
<keyword id="KW-0677">Repeat</keyword>
<organism>
    <name type="scientific">Bos taurus</name>
    <name type="common">Bovine</name>
    <dbReference type="NCBI Taxonomy" id="9913"/>
    <lineage>
        <taxon>Eukaryota</taxon>
        <taxon>Metazoa</taxon>
        <taxon>Chordata</taxon>
        <taxon>Craniata</taxon>
        <taxon>Vertebrata</taxon>
        <taxon>Euteleostomi</taxon>
        <taxon>Mammalia</taxon>
        <taxon>Eutheria</taxon>
        <taxon>Laurasiatheria</taxon>
        <taxon>Artiodactyla</taxon>
        <taxon>Ruminantia</taxon>
        <taxon>Pecora</taxon>
        <taxon>Bovidae</taxon>
        <taxon>Bovinae</taxon>
        <taxon>Bos</taxon>
    </lineage>
</organism>
<accession>Q4PL64</accession>
<accession>Q148J5</accession>
<gene>
    <name evidence="1" type="primary">HPCA</name>
</gene>
<name>HPCA_BOVIN</name>
<evidence type="ECO:0000250" key="1">
    <source>
        <dbReference type="UniProtKB" id="P84074"/>
    </source>
</evidence>
<evidence type="ECO:0000250" key="2">
    <source>
        <dbReference type="UniProtKB" id="P84076"/>
    </source>
</evidence>
<evidence type="ECO:0000255" key="3">
    <source>
        <dbReference type="PROSITE-ProRule" id="PRU00448"/>
    </source>
</evidence>
<evidence type="ECO:0000305" key="4"/>
<proteinExistence type="evidence at transcript level"/>